<dbReference type="EMBL" id="L77117">
    <property type="protein sequence ID" value="AAB99257.1"/>
    <property type="molecule type" value="Genomic_DNA"/>
</dbReference>
<dbReference type="PIR" id="D64455">
    <property type="entry name" value="D64455"/>
</dbReference>
<dbReference type="RefSeq" id="WP_010870757.1">
    <property type="nucleotide sequence ID" value="NC_000909.1"/>
</dbReference>
<dbReference type="SMR" id="Q58642"/>
<dbReference type="STRING" id="243232.MJ_1245"/>
<dbReference type="PaxDb" id="243232-MJ_1245"/>
<dbReference type="EnsemblBacteria" id="AAB99257">
    <property type="protein sequence ID" value="AAB99257"/>
    <property type="gene ID" value="MJ_1245"/>
</dbReference>
<dbReference type="GeneID" id="1452141"/>
<dbReference type="KEGG" id="mja:MJ_1245"/>
<dbReference type="eggNOG" id="arCOG03424">
    <property type="taxonomic scope" value="Archaea"/>
</dbReference>
<dbReference type="HOGENOM" id="CLU_145179_0_0_2"/>
<dbReference type="InParanoid" id="Q58642"/>
<dbReference type="OrthoDB" id="65720at2157"/>
<dbReference type="PhylomeDB" id="Q58642"/>
<dbReference type="Proteomes" id="UP000000805">
    <property type="component" value="Chromosome"/>
</dbReference>
<dbReference type="InterPro" id="IPR024184">
    <property type="entry name" value="UCP005637"/>
</dbReference>
<dbReference type="InterPro" id="IPR019296">
    <property type="entry name" value="Unchr_N-regulatory-PII-rel"/>
</dbReference>
<dbReference type="Pfam" id="PF10126">
    <property type="entry name" value="Nit_Regul_Hom"/>
    <property type="match status" value="1"/>
</dbReference>
<dbReference type="PIRSF" id="PIRSF005637">
    <property type="entry name" value="UCP005637"/>
    <property type="match status" value="1"/>
</dbReference>
<organism>
    <name type="scientific">Methanocaldococcus jannaschii (strain ATCC 43067 / DSM 2661 / JAL-1 / JCM 10045 / NBRC 100440)</name>
    <name type="common">Methanococcus jannaschii</name>
    <dbReference type="NCBI Taxonomy" id="243232"/>
    <lineage>
        <taxon>Archaea</taxon>
        <taxon>Methanobacteriati</taxon>
        <taxon>Methanobacteriota</taxon>
        <taxon>Methanomada group</taxon>
        <taxon>Methanococci</taxon>
        <taxon>Methanococcales</taxon>
        <taxon>Methanocaldococcaceae</taxon>
        <taxon>Methanocaldococcus</taxon>
    </lineage>
</organism>
<accession>Q58642</accession>
<keyword id="KW-1185">Reference proteome</keyword>
<reference key="1">
    <citation type="journal article" date="1996" name="Science">
        <title>Complete genome sequence of the methanogenic archaeon, Methanococcus jannaschii.</title>
        <authorList>
            <person name="Bult C.J."/>
            <person name="White O."/>
            <person name="Olsen G.J."/>
            <person name="Zhou L."/>
            <person name="Fleischmann R.D."/>
            <person name="Sutton G.G."/>
            <person name="Blake J.A."/>
            <person name="FitzGerald L.M."/>
            <person name="Clayton R.A."/>
            <person name="Gocayne J.D."/>
            <person name="Kerlavage A.R."/>
            <person name="Dougherty B.A."/>
            <person name="Tomb J.-F."/>
            <person name="Adams M.D."/>
            <person name="Reich C.I."/>
            <person name="Overbeek R."/>
            <person name="Kirkness E.F."/>
            <person name="Weinstock K.G."/>
            <person name="Merrick J.M."/>
            <person name="Glodek A."/>
            <person name="Scott J.L."/>
            <person name="Geoghagen N.S.M."/>
            <person name="Weidman J.F."/>
            <person name="Fuhrmann J.L."/>
            <person name="Nguyen D."/>
            <person name="Utterback T.R."/>
            <person name="Kelley J.M."/>
            <person name="Peterson J.D."/>
            <person name="Sadow P.W."/>
            <person name="Hanna M.C."/>
            <person name="Cotton M.D."/>
            <person name="Roberts K.M."/>
            <person name="Hurst M.A."/>
            <person name="Kaine B.P."/>
            <person name="Borodovsky M."/>
            <person name="Klenk H.-P."/>
            <person name="Fraser C.M."/>
            <person name="Smith H.O."/>
            <person name="Woese C.R."/>
            <person name="Venter J.C."/>
        </authorList>
    </citation>
    <scope>NUCLEOTIDE SEQUENCE [LARGE SCALE GENOMIC DNA]</scope>
    <source>
        <strain>ATCC 43067 / DSM 2661 / JAL-1 / JCM 10045 / NBRC 100440</strain>
    </source>
</reference>
<feature type="chain" id="PRO_0000107236" description="Uncharacterized protein MJ1245">
    <location>
        <begin position="1"/>
        <end position="112"/>
    </location>
</feature>
<sequence length="112" mass="13105">MTKRVLFELFVEEKNVGKAINIMTLAGITGFFLHKYRGLSPDKFKNLSKEELEDIEKVYEIIRDESDKAVVIGTVVKEEKAKKIEELLKEKMNNERWTVMKIPILKVKVHRV</sequence>
<evidence type="ECO:0000305" key="1"/>
<name>Y1245_METJA</name>
<protein>
    <recommendedName>
        <fullName>Uncharacterized protein MJ1245</fullName>
    </recommendedName>
</protein>
<proteinExistence type="predicted"/>
<comment type="similarity">
    <text evidence="1">To M.jannaschii MJ1244 and M.thermoautotrophicum MTH1110.</text>
</comment>
<gene>
    <name type="ordered locus">MJ1245</name>
</gene>